<name>RPI1_YEAST</name>
<gene>
    <name type="primary">RPI1</name>
    <name type="ordered locus">YIL119C</name>
</gene>
<dbReference type="EMBL" id="M63178">
    <property type="protein sequence ID" value="AAA35001.1"/>
    <property type="molecule type" value="Genomic_DNA"/>
</dbReference>
<dbReference type="EMBL" id="S42682">
    <property type="protein sequence ID" value="AAB39843.1"/>
    <property type="molecule type" value="Genomic_DNA"/>
</dbReference>
<dbReference type="EMBL" id="Z46833">
    <property type="protein sequence ID" value="CAA86873.1"/>
    <property type="molecule type" value="Genomic_DNA"/>
</dbReference>
<dbReference type="EMBL" id="AY558088">
    <property type="protein sequence ID" value="AAS56414.1"/>
    <property type="molecule type" value="Genomic_DNA"/>
</dbReference>
<dbReference type="EMBL" id="BK006942">
    <property type="protein sequence ID" value="DAA08434.1"/>
    <property type="molecule type" value="Genomic_DNA"/>
</dbReference>
<dbReference type="PIR" id="S49890">
    <property type="entry name" value="S49890"/>
</dbReference>
<dbReference type="RefSeq" id="NP_012147.3">
    <property type="nucleotide sequence ID" value="NM_001179467.3"/>
</dbReference>
<dbReference type="SMR" id="P23250"/>
<dbReference type="BioGRID" id="34872">
    <property type="interactions" value="82"/>
</dbReference>
<dbReference type="DIP" id="DIP-3802N"/>
<dbReference type="FunCoup" id="P23250">
    <property type="interactions" value="92"/>
</dbReference>
<dbReference type="IntAct" id="P23250">
    <property type="interactions" value="6"/>
</dbReference>
<dbReference type="STRING" id="4932.YIL119C"/>
<dbReference type="iPTMnet" id="P23250"/>
<dbReference type="PaxDb" id="4932-YIL119C"/>
<dbReference type="PeptideAtlas" id="P23250"/>
<dbReference type="EnsemblFungi" id="YIL119C_mRNA">
    <property type="protein sequence ID" value="YIL119C"/>
    <property type="gene ID" value="YIL119C"/>
</dbReference>
<dbReference type="GeneID" id="854687"/>
<dbReference type="KEGG" id="sce:YIL119C"/>
<dbReference type="AGR" id="SGD:S000001381"/>
<dbReference type="SGD" id="S000001381">
    <property type="gene designation" value="RPI1"/>
</dbReference>
<dbReference type="VEuPathDB" id="FungiDB:YIL119C"/>
<dbReference type="eggNOG" id="ENOG502S5B4">
    <property type="taxonomic scope" value="Eukaryota"/>
</dbReference>
<dbReference type="HOGENOM" id="CLU_702393_0_0_1"/>
<dbReference type="InParanoid" id="P23250"/>
<dbReference type="OMA" id="HENEQNR"/>
<dbReference type="OrthoDB" id="4036644at2759"/>
<dbReference type="BioCyc" id="YEAST:G3O-31372-MONOMER"/>
<dbReference type="BioGRID-ORCS" id="854687">
    <property type="hits" value="0 hits in 10 CRISPR screens"/>
</dbReference>
<dbReference type="PRO" id="PR:P23250"/>
<dbReference type="Proteomes" id="UP000002311">
    <property type="component" value="Chromosome IX"/>
</dbReference>
<dbReference type="RNAct" id="P23250">
    <property type="molecule type" value="protein"/>
</dbReference>
<dbReference type="GO" id="GO:0005634">
    <property type="term" value="C:nucleus"/>
    <property type="evidence" value="ECO:0000314"/>
    <property type="project" value="SGD"/>
</dbReference>
<dbReference type="GO" id="GO:0003677">
    <property type="term" value="F:DNA binding"/>
    <property type="evidence" value="ECO:0007669"/>
    <property type="project" value="UniProtKB-KW"/>
</dbReference>
<dbReference type="GO" id="GO:0030695">
    <property type="term" value="F:GTPase regulator activity"/>
    <property type="evidence" value="ECO:0000315"/>
    <property type="project" value="SGD"/>
</dbReference>
<dbReference type="GO" id="GO:0009272">
    <property type="term" value="P:fungal-type cell wall biogenesis"/>
    <property type="evidence" value="ECO:0000315"/>
    <property type="project" value="SGD"/>
</dbReference>
<dbReference type="GO" id="GO:0045944">
    <property type="term" value="P:positive regulation of transcription by RNA polymerase II"/>
    <property type="evidence" value="ECO:0000315"/>
    <property type="project" value="SGD"/>
</dbReference>
<dbReference type="GO" id="GO:0007265">
    <property type="term" value="P:Ras protein signal transduction"/>
    <property type="evidence" value="ECO:0000315"/>
    <property type="project" value="SGD"/>
</dbReference>
<dbReference type="InterPro" id="IPR001005">
    <property type="entry name" value="SANT/Myb"/>
</dbReference>
<dbReference type="PROSITE" id="PS50090">
    <property type="entry name" value="MYB_LIKE"/>
    <property type="match status" value="1"/>
</dbReference>
<organism>
    <name type="scientific">Saccharomyces cerevisiae (strain ATCC 204508 / S288c)</name>
    <name type="common">Baker's yeast</name>
    <dbReference type="NCBI Taxonomy" id="559292"/>
    <lineage>
        <taxon>Eukaryota</taxon>
        <taxon>Fungi</taxon>
        <taxon>Dikarya</taxon>
        <taxon>Ascomycota</taxon>
        <taxon>Saccharomycotina</taxon>
        <taxon>Saccharomycetes</taxon>
        <taxon>Saccharomycetales</taxon>
        <taxon>Saccharomycetaceae</taxon>
        <taxon>Saccharomyces</taxon>
    </lineage>
</organism>
<proteinExistence type="evidence at protein level"/>
<accession>P23250</accession>
<accession>D6VVG8</accession>
<accession>E9P8U9</accession>
<evidence type="ECO:0000255" key="1">
    <source>
        <dbReference type="PROSITE-ProRule" id="PRU00133"/>
    </source>
</evidence>
<evidence type="ECO:0000256" key="2">
    <source>
        <dbReference type="SAM" id="MobiDB-lite"/>
    </source>
</evidence>
<evidence type="ECO:0000269" key="3">
    <source>
    </source>
</evidence>
<evidence type="ECO:0000305" key="4"/>
<comment type="function">
    <text>Negative regulator of the Ras-cyclic AMP pathway. Negatively regulate the activity of normal but not mutationally activated Ras proteins. The down-regulatory effect of RPI1 requires the presence of one of the two Ras GTPase activators, IRA1 and IRA2.</text>
</comment>
<comment type="subcellular location">
    <subcellularLocation>
        <location evidence="4">Nucleus</location>
    </subcellularLocation>
</comment>
<comment type="miscellaneous">
    <text evidence="3">Present with 1340 molecules/cell in log phase SD medium.</text>
</comment>
<reference key="1">
    <citation type="journal article" date="1991" name="Mol. Cell. Biol.">
        <title>Overexpression of RPI1, a novel inhibitor of the yeast Ras-cyclic AMP pathway, down-regulates normal but not mutationally activated ras function.</title>
        <authorList>
            <person name="Kim J.-H."/>
            <person name="Powers S."/>
        </authorList>
    </citation>
    <scope>NUCLEOTIDE SEQUENCE [GENOMIC DNA]</scope>
</reference>
<reference key="2">
    <citation type="journal article" date="1997" name="Nature">
        <title>The nucleotide sequence of Saccharomyces cerevisiae chromosome IX.</title>
        <authorList>
            <person name="Churcher C.M."/>
            <person name="Bowman S."/>
            <person name="Badcock K."/>
            <person name="Bankier A.T."/>
            <person name="Brown D."/>
            <person name="Chillingworth T."/>
            <person name="Connor R."/>
            <person name="Devlin K."/>
            <person name="Gentles S."/>
            <person name="Hamlin N."/>
            <person name="Harris D.E."/>
            <person name="Horsnell T."/>
            <person name="Hunt S."/>
            <person name="Jagels K."/>
            <person name="Jones M."/>
            <person name="Lye G."/>
            <person name="Moule S."/>
            <person name="Odell C."/>
            <person name="Pearson D."/>
            <person name="Rajandream M.A."/>
            <person name="Rice P."/>
            <person name="Rowley N."/>
            <person name="Skelton J."/>
            <person name="Smith V."/>
            <person name="Walsh S.V."/>
            <person name="Whitehead S."/>
            <person name="Barrell B.G."/>
        </authorList>
    </citation>
    <scope>NUCLEOTIDE SEQUENCE [LARGE SCALE GENOMIC DNA]</scope>
    <source>
        <strain>ATCC 204508 / S288c</strain>
    </source>
</reference>
<reference key="3">
    <citation type="journal article" date="2014" name="G3 (Bethesda)">
        <title>The reference genome sequence of Saccharomyces cerevisiae: Then and now.</title>
        <authorList>
            <person name="Engel S.R."/>
            <person name="Dietrich F.S."/>
            <person name="Fisk D.G."/>
            <person name="Binkley G."/>
            <person name="Balakrishnan R."/>
            <person name="Costanzo M.C."/>
            <person name="Dwight S.S."/>
            <person name="Hitz B.C."/>
            <person name="Karra K."/>
            <person name="Nash R.S."/>
            <person name="Weng S."/>
            <person name="Wong E.D."/>
            <person name="Lloyd P."/>
            <person name="Skrzypek M.S."/>
            <person name="Miyasato S.R."/>
            <person name="Simison M."/>
            <person name="Cherry J.M."/>
        </authorList>
    </citation>
    <scope>GENOME REANNOTATION</scope>
    <source>
        <strain>ATCC 204508 / S288c</strain>
    </source>
</reference>
<reference key="4">
    <citation type="journal article" date="2007" name="Genome Res.">
        <title>Approaching a complete repository of sequence-verified protein-encoding clones for Saccharomyces cerevisiae.</title>
        <authorList>
            <person name="Hu Y."/>
            <person name="Rolfs A."/>
            <person name="Bhullar B."/>
            <person name="Murthy T.V.S."/>
            <person name="Zhu C."/>
            <person name="Berger M.F."/>
            <person name="Camargo A.A."/>
            <person name="Kelley F."/>
            <person name="McCarron S."/>
            <person name="Jepson D."/>
            <person name="Richardson A."/>
            <person name="Raphael J."/>
            <person name="Moreira D."/>
            <person name="Taycher E."/>
            <person name="Zuo D."/>
            <person name="Mohr S."/>
            <person name="Kane M.F."/>
            <person name="Williamson J."/>
            <person name="Simpson A.J.G."/>
            <person name="Bulyk M.L."/>
            <person name="Harlow E."/>
            <person name="Marsischky G."/>
            <person name="Kolodner R.D."/>
            <person name="LaBaer J."/>
        </authorList>
    </citation>
    <scope>NUCLEOTIDE SEQUENCE [GENOMIC DNA]</scope>
    <source>
        <strain>ATCC 204508 / S288c</strain>
    </source>
</reference>
<reference key="5">
    <citation type="journal article" date="2003" name="Nature">
        <title>Global analysis of protein expression in yeast.</title>
        <authorList>
            <person name="Ghaemmaghami S."/>
            <person name="Huh W.-K."/>
            <person name="Bower K."/>
            <person name="Howson R.W."/>
            <person name="Belle A."/>
            <person name="Dephoure N."/>
            <person name="O'Shea E.K."/>
            <person name="Weissman J.S."/>
        </authorList>
    </citation>
    <scope>LEVEL OF PROTEIN EXPRESSION [LARGE SCALE ANALYSIS]</scope>
</reference>
<reference key="6">
    <citation type="journal article" date="2009" name="Science">
        <title>Global analysis of Cdk1 substrate phosphorylation sites provides insights into evolution.</title>
        <authorList>
            <person name="Holt L.J."/>
            <person name="Tuch B.B."/>
            <person name="Villen J."/>
            <person name="Johnson A.D."/>
            <person name="Gygi S.P."/>
            <person name="Morgan D.O."/>
        </authorList>
    </citation>
    <scope>IDENTIFICATION BY MASS SPECTROMETRY [LARGE SCALE ANALYSIS]</scope>
</reference>
<sequence length="407" mass="46623">MYLEYLQPKLNLMDESSTISKNFPDYSPNLNTPITSNFNEETGSDCSLVTPRIISSSNSNSNSNSNSNSNSNSGSIDENELNNSNSSSSSARQIRKKWKEPEDIAFITTIMNNSQLLTFVEYFKPMKNFWKKISKILFQQYGYERNSRQCHDRFKVLYTKSLKVHPSKKSKQKKKKSKQEAGSNLNFDPSKLSRMQYLLVQLQNTFSFVNGNIILKSQKTLKPNKNGTNDNINNHYYNNCNNNNNNINNSNNSNNNNSNNINRNSNHSTNVFSTPEHIQSSINLDKLESLPALDTKGEPSFISPAQFSLLSSAPADNLILQTPPSPFFQQTMPIQLPRDAQQEQISPVFSTDVIYMWQTMFNTIENLKEQVNCLKNEVKQLNHKFYQQNKPLHNMSTSDSENFMQQH</sequence>
<protein>
    <recommendedName>
        <fullName>Negative RAS protein regulator protein</fullName>
    </recommendedName>
</protein>
<feature type="chain" id="PRO_0000197113" description="Negative RAS protein regulator protein">
    <location>
        <begin position="1"/>
        <end position="407"/>
    </location>
</feature>
<feature type="domain" description="Myb-like" evidence="1">
    <location>
        <begin position="90"/>
        <end position="158"/>
    </location>
</feature>
<feature type="region of interest" description="Disordered" evidence="2">
    <location>
        <begin position="51"/>
        <end position="94"/>
    </location>
</feature>
<feature type="region of interest" description="Disordered" evidence="2">
    <location>
        <begin position="165"/>
        <end position="187"/>
    </location>
</feature>
<feature type="region of interest" description="Disordered" evidence="2">
    <location>
        <begin position="241"/>
        <end position="273"/>
    </location>
</feature>
<feature type="compositionally biased region" description="Low complexity" evidence="2">
    <location>
        <begin position="55"/>
        <end position="73"/>
    </location>
</feature>
<feature type="compositionally biased region" description="Basic residues" evidence="2">
    <location>
        <begin position="165"/>
        <end position="177"/>
    </location>
</feature>
<feature type="compositionally biased region" description="Low complexity" evidence="2">
    <location>
        <begin position="241"/>
        <end position="270"/>
    </location>
</feature>
<feature type="sequence conflict" description="In Ref. 1; AAA35001/AAB39843." evidence="4" ref="1">
    <original>N</original>
    <variation>K</variation>
    <location>
        <position position="37"/>
    </location>
</feature>
<feature type="sequence conflict" description="In Ref. 1; AAA35001/AAB39843." evidence="4" ref="1">
    <original>SNS</original>
    <variation>P</variation>
    <location>
        <begin position="71"/>
        <end position="73"/>
    </location>
</feature>
<feature type="sequence conflict" description="In Ref. 1; AAA35001/AAB39843." evidence="4" ref="1">
    <original>A</original>
    <variation>V</variation>
    <location>
        <position position="91"/>
    </location>
</feature>
<feature type="sequence conflict" description="In Ref. 1; AAA35001/AAB39843." evidence="4" ref="1">
    <location>
        <begin position="170"/>
        <end position="174"/>
    </location>
</feature>
<feature type="sequence conflict" description="In Ref. 4; AAS56414." evidence="4" ref="4">
    <original>S</original>
    <variation>P</variation>
    <location>
        <position position="190"/>
    </location>
</feature>
<feature type="sequence conflict" description="In Ref. 1; AAA35001/AAB39843." evidence="4" ref="1">
    <original>C</original>
    <variation>S</variation>
    <location>
        <position position="240"/>
    </location>
</feature>
<feature type="sequence conflict" description="In Ref. 1; AAA35001/AAB39843." evidence="4" ref="1">
    <original>N</original>
    <variation>S</variation>
    <location>
        <position position="242"/>
    </location>
</feature>
<feature type="sequence conflict" description="In Ref. 1; AAA35001/AAB39843." evidence="4" ref="1">
    <original>N</original>
    <variation>NNNNSNN</variation>
    <location>
        <position position="252"/>
    </location>
</feature>
<keyword id="KW-0238">DNA-binding</keyword>
<keyword id="KW-0539">Nucleus</keyword>
<keyword id="KW-1185">Reference proteome</keyword>